<gene>
    <name evidence="1" type="primary">atpB</name>
    <name type="ordered locus">Pmen_4613</name>
</gene>
<dbReference type="EMBL" id="CP000680">
    <property type="protein sequence ID" value="ABP87359.1"/>
    <property type="molecule type" value="Genomic_DNA"/>
</dbReference>
<dbReference type="SMR" id="A4Y193"/>
<dbReference type="STRING" id="399739.Pmen_4613"/>
<dbReference type="KEGG" id="pmy:Pmen_4613"/>
<dbReference type="PATRIC" id="fig|399739.8.peg.4678"/>
<dbReference type="eggNOG" id="COG0356">
    <property type="taxonomic scope" value="Bacteria"/>
</dbReference>
<dbReference type="HOGENOM" id="CLU_041018_1_0_6"/>
<dbReference type="OrthoDB" id="9789241at2"/>
<dbReference type="GO" id="GO:0005886">
    <property type="term" value="C:plasma membrane"/>
    <property type="evidence" value="ECO:0007669"/>
    <property type="project" value="UniProtKB-SubCell"/>
</dbReference>
<dbReference type="GO" id="GO:0045259">
    <property type="term" value="C:proton-transporting ATP synthase complex"/>
    <property type="evidence" value="ECO:0007669"/>
    <property type="project" value="UniProtKB-KW"/>
</dbReference>
<dbReference type="GO" id="GO:0046933">
    <property type="term" value="F:proton-transporting ATP synthase activity, rotational mechanism"/>
    <property type="evidence" value="ECO:0007669"/>
    <property type="project" value="UniProtKB-UniRule"/>
</dbReference>
<dbReference type="GO" id="GO:0042777">
    <property type="term" value="P:proton motive force-driven plasma membrane ATP synthesis"/>
    <property type="evidence" value="ECO:0007669"/>
    <property type="project" value="TreeGrafter"/>
</dbReference>
<dbReference type="CDD" id="cd00310">
    <property type="entry name" value="ATP-synt_Fo_a_6"/>
    <property type="match status" value="1"/>
</dbReference>
<dbReference type="FunFam" id="1.20.120.220:FF:000002">
    <property type="entry name" value="ATP synthase subunit a"/>
    <property type="match status" value="1"/>
</dbReference>
<dbReference type="Gene3D" id="1.20.120.220">
    <property type="entry name" value="ATP synthase, F0 complex, subunit A"/>
    <property type="match status" value="1"/>
</dbReference>
<dbReference type="HAMAP" id="MF_01393">
    <property type="entry name" value="ATP_synth_a_bact"/>
    <property type="match status" value="1"/>
</dbReference>
<dbReference type="InterPro" id="IPR045082">
    <property type="entry name" value="ATP_syn_F0_a_bact/chloroplast"/>
</dbReference>
<dbReference type="InterPro" id="IPR000568">
    <property type="entry name" value="ATP_synth_F0_asu"/>
</dbReference>
<dbReference type="InterPro" id="IPR023011">
    <property type="entry name" value="ATP_synth_F0_asu_AS"/>
</dbReference>
<dbReference type="InterPro" id="IPR035908">
    <property type="entry name" value="F0_ATP_A_sf"/>
</dbReference>
<dbReference type="NCBIfam" id="TIGR01131">
    <property type="entry name" value="ATP_synt_6_or_A"/>
    <property type="match status" value="1"/>
</dbReference>
<dbReference type="NCBIfam" id="NF004477">
    <property type="entry name" value="PRK05815.1-1"/>
    <property type="match status" value="1"/>
</dbReference>
<dbReference type="PANTHER" id="PTHR42823">
    <property type="entry name" value="ATP SYNTHASE SUBUNIT A, CHLOROPLASTIC"/>
    <property type="match status" value="1"/>
</dbReference>
<dbReference type="PANTHER" id="PTHR42823:SF3">
    <property type="entry name" value="ATP SYNTHASE SUBUNIT A, CHLOROPLASTIC"/>
    <property type="match status" value="1"/>
</dbReference>
<dbReference type="Pfam" id="PF00119">
    <property type="entry name" value="ATP-synt_A"/>
    <property type="match status" value="1"/>
</dbReference>
<dbReference type="PRINTS" id="PR00123">
    <property type="entry name" value="ATPASEA"/>
</dbReference>
<dbReference type="SUPFAM" id="SSF81336">
    <property type="entry name" value="F1F0 ATP synthase subunit A"/>
    <property type="match status" value="1"/>
</dbReference>
<dbReference type="PROSITE" id="PS00449">
    <property type="entry name" value="ATPASE_A"/>
    <property type="match status" value="1"/>
</dbReference>
<accession>A4Y193</accession>
<name>ATP6_ECTM1</name>
<reference key="1">
    <citation type="submission" date="2007-04" db="EMBL/GenBank/DDBJ databases">
        <title>Complete sequence of Pseudomonas mendocina ymp.</title>
        <authorList>
            <consortium name="US DOE Joint Genome Institute"/>
            <person name="Copeland A."/>
            <person name="Lucas S."/>
            <person name="Lapidus A."/>
            <person name="Barry K."/>
            <person name="Glavina del Rio T."/>
            <person name="Dalin E."/>
            <person name="Tice H."/>
            <person name="Pitluck S."/>
            <person name="Kiss H."/>
            <person name="Brettin T."/>
            <person name="Detter J.C."/>
            <person name="Bruce D."/>
            <person name="Han C."/>
            <person name="Schmutz J."/>
            <person name="Larimer F."/>
            <person name="Land M."/>
            <person name="Hauser L."/>
            <person name="Kyrpides N."/>
            <person name="Mikhailova N."/>
            <person name="Hersman L."/>
            <person name="Dubois J."/>
            <person name="Maurice P."/>
            <person name="Richardson P."/>
        </authorList>
    </citation>
    <scope>NUCLEOTIDE SEQUENCE [LARGE SCALE GENOMIC DNA]</scope>
    <source>
        <strain>ymp</strain>
    </source>
</reference>
<keyword id="KW-0066">ATP synthesis</keyword>
<keyword id="KW-0997">Cell inner membrane</keyword>
<keyword id="KW-1003">Cell membrane</keyword>
<keyword id="KW-0138">CF(0)</keyword>
<keyword id="KW-0375">Hydrogen ion transport</keyword>
<keyword id="KW-0406">Ion transport</keyword>
<keyword id="KW-0472">Membrane</keyword>
<keyword id="KW-0812">Transmembrane</keyword>
<keyword id="KW-1133">Transmembrane helix</keyword>
<keyword id="KW-0813">Transport</keyword>
<sequence length="272" mass="30444">MADTPAEYIQHHLQNLVYGSHPEKGWIIAQTPEEVKAMGFWAVHVDTLGWSLFMGLIFITLFRMAAKKAVTGVPSGLQNMAEMCIEFVQGIVKDTFHGKNPLVAPLALTIFVWVFLMNSLKWIPVDYIPGLAHAMGLPYFKIVPTADPNGTFGISLGVFLLIIFYSIKVKGVGGFTKELSFTPFNHWALIPFNLFLEIIGLLTKPLSLALRLFGNMYAGEVVFILIALLPFYVQWGLNVPWAIFHILVIPLQAFIFMVLTVVYLSAAHEDHH</sequence>
<evidence type="ECO:0000255" key="1">
    <source>
        <dbReference type="HAMAP-Rule" id="MF_01393"/>
    </source>
</evidence>
<feature type="chain" id="PRO_0000362395" description="ATP synthase subunit a">
    <location>
        <begin position="1"/>
        <end position="272"/>
    </location>
</feature>
<feature type="transmembrane region" description="Helical" evidence="1">
    <location>
        <begin position="39"/>
        <end position="59"/>
    </location>
</feature>
<feature type="transmembrane region" description="Helical" evidence="1">
    <location>
        <begin position="103"/>
        <end position="123"/>
    </location>
</feature>
<feature type="transmembrane region" description="Helical" evidence="1">
    <location>
        <begin position="124"/>
        <end position="144"/>
    </location>
</feature>
<feature type="transmembrane region" description="Helical" evidence="1">
    <location>
        <begin position="152"/>
        <end position="172"/>
    </location>
</feature>
<feature type="transmembrane region" description="Helical" evidence="1">
    <location>
        <begin position="181"/>
        <end position="201"/>
    </location>
</feature>
<feature type="transmembrane region" description="Helical" evidence="1">
    <location>
        <begin position="221"/>
        <end position="241"/>
    </location>
</feature>
<feature type="transmembrane region" description="Helical" evidence="1">
    <location>
        <begin position="242"/>
        <end position="262"/>
    </location>
</feature>
<proteinExistence type="inferred from homology"/>
<organism>
    <name type="scientific">Ectopseudomonas mendocina (strain ymp)</name>
    <name type="common">Pseudomonas mendocina</name>
    <dbReference type="NCBI Taxonomy" id="399739"/>
    <lineage>
        <taxon>Bacteria</taxon>
        <taxon>Pseudomonadati</taxon>
        <taxon>Pseudomonadota</taxon>
        <taxon>Gammaproteobacteria</taxon>
        <taxon>Pseudomonadales</taxon>
        <taxon>Pseudomonadaceae</taxon>
        <taxon>Ectopseudomonas</taxon>
    </lineage>
</organism>
<protein>
    <recommendedName>
        <fullName evidence="1">ATP synthase subunit a</fullName>
    </recommendedName>
    <alternativeName>
        <fullName evidence="1">ATP synthase F0 sector subunit a</fullName>
    </alternativeName>
    <alternativeName>
        <fullName evidence="1">F-ATPase subunit 6</fullName>
    </alternativeName>
</protein>
<comment type="function">
    <text evidence="1">Key component of the proton channel; it plays a direct role in the translocation of protons across the membrane.</text>
</comment>
<comment type="subunit">
    <text evidence="1">F-type ATPases have 2 components, CF(1) - the catalytic core - and CF(0) - the membrane proton channel. CF(1) has five subunits: alpha(3), beta(3), gamma(1), delta(1), epsilon(1). CF(0) has three main subunits: a(1), b(2) and c(9-12). The alpha and beta chains form an alternating ring which encloses part of the gamma chain. CF(1) is attached to CF(0) by a central stalk formed by the gamma and epsilon chains, while a peripheral stalk is formed by the delta and b chains.</text>
</comment>
<comment type="subcellular location">
    <subcellularLocation>
        <location evidence="1">Cell inner membrane</location>
        <topology evidence="1">Multi-pass membrane protein</topology>
    </subcellularLocation>
</comment>
<comment type="similarity">
    <text evidence="1">Belongs to the ATPase A chain family.</text>
</comment>